<feature type="chain" id="PRO_0000120178" description="Thiol:disulfide interchange protein TxlA">
    <location>
        <begin position="1"/>
        <end position="191"/>
    </location>
</feature>
<feature type="transmembrane region" description="Helical" evidence="1">
    <location>
        <begin position="14"/>
        <end position="30"/>
    </location>
</feature>
<feature type="domain" description="Thioredoxin" evidence="2">
    <location>
        <begin position="27"/>
        <end position="148"/>
    </location>
</feature>
<feature type="region of interest" description="Disordered" evidence="3">
    <location>
        <begin position="165"/>
        <end position="191"/>
    </location>
</feature>
<feature type="compositionally biased region" description="Polar residues" evidence="3">
    <location>
        <begin position="165"/>
        <end position="185"/>
    </location>
</feature>
<feature type="disulfide bond" description="Redox-active" evidence="2">
    <location>
        <begin position="69"/>
        <end position="72"/>
    </location>
</feature>
<name>TXLA_SYNE7</name>
<evidence type="ECO:0000255" key="1"/>
<evidence type="ECO:0000255" key="2">
    <source>
        <dbReference type="PROSITE-ProRule" id="PRU00691"/>
    </source>
</evidence>
<evidence type="ECO:0000256" key="3">
    <source>
        <dbReference type="SAM" id="MobiDB-lite"/>
    </source>
</evidence>
<evidence type="ECO:0000305" key="4"/>
<accession>P35088</accession>
<accession>Q31LB1</accession>
<proteinExistence type="inferred from homology"/>
<keyword id="KW-1003">Cell membrane</keyword>
<keyword id="KW-1015">Disulfide bond</keyword>
<keyword id="KW-0472">Membrane</keyword>
<keyword id="KW-0676">Redox-active center</keyword>
<keyword id="KW-1185">Reference proteome</keyword>
<keyword id="KW-0812">Transmembrane</keyword>
<keyword id="KW-1133">Transmembrane helix</keyword>
<sequence>MTADNSVPSRLRNILVIAAALVLTILVVLGSRQPSAAASLASLAEQATPYEVAIANDRPMLLEFYADWCTSCQAMAGRIAALKQDYSDRLDFVMLNIDNDKWLPEVLDYNVDGIPQFVYLNGQGQPQGISIGELPRSVLAANLDALVEAQPLPYTNARGNLSEFSADLQPSRSSQTDPRSHSGQVQDGVLD</sequence>
<reference key="1">
    <citation type="journal article" date="1995" name="J. Bacteriol.">
        <title>Disruption of a gene encoding a novel thioredoxin-like protein alters the cyanobacterial photosynthetic apparatus.</title>
        <authorList>
            <person name="Collier J.L."/>
            <person name="Grossman A.R."/>
        </authorList>
    </citation>
    <scope>NUCLEOTIDE SEQUENCE [GENOMIC DNA]</scope>
</reference>
<reference key="2">
    <citation type="submission" date="2005-08" db="EMBL/GenBank/DDBJ databases">
        <title>Complete sequence of chromosome 1 of Synechococcus elongatus PCC 7942.</title>
        <authorList>
            <consortium name="US DOE Joint Genome Institute"/>
            <person name="Copeland A."/>
            <person name="Lucas S."/>
            <person name="Lapidus A."/>
            <person name="Barry K."/>
            <person name="Detter J.C."/>
            <person name="Glavina T."/>
            <person name="Hammon N."/>
            <person name="Israni S."/>
            <person name="Pitluck S."/>
            <person name="Schmutz J."/>
            <person name="Larimer F."/>
            <person name="Land M."/>
            <person name="Kyrpides N."/>
            <person name="Lykidis A."/>
            <person name="Golden S."/>
            <person name="Richardson P."/>
        </authorList>
    </citation>
    <scope>NUCLEOTIDE SEQUENCE [LARGE SCALE GENOMIC DNA]</scope>
    <source>
        <strain>ATCC 33912 / PCC 7942 / FACHB-805</strain>
    </source>
</reference>
<comment type="function">
    <text>Required for disulfide bond formation in some proteins. Acts by transferring its disulfide bond to other proteins and is reduced in the process.</text>
</comment>
<comment type="subcellular location">
    <subcellularLocation>
        <location evidence="4">Cell membrane</location>
        <topology evidence="4">Single-pass membrane protein</topology>
    </subcellularLocation>
</comment>
<comment type="similarity">
    <text evidence="4">Belongs to the thioredoxin family.</text>
</comment>
<gene>
    <name type="primary">txlA</name>
    <name type="ordered locus">Synpcc7942_2128</name>
</gene>
<protein>
    <recommendedName>
        <fullName>Thiol:disulfide interchange protein TxlA</fullName>
    </recommendedName>
</protein>
<organism>
    <name type="scientific">Synechococcus elongatus (strain ATCC 33912 / PCC 7942 / FACHB-805)</name>
    <name type="common">Anacystis nidulans R2</name>
    <dbReference type="NCBI Taxonomy" id="1140"/>
    <lineage>
        <taxon>Bacteria</taxon>
        <taxon>Bacillati</taxon>
        <taxon>Cyanobacteriota</taxon>
        <taxon>Cyanophyceae</taxon>
        <taxon>Synechococcales</taxon>
        <taxon>Synechococcaceae</taxon>
        <taxon>Synechococcus</taxon>
    </lineage>
</organism>
<dbReference type="EMBL" id="U05044">
    <property type="protein sequence ID" value="AAA89104.1"/>
    <property type="molecule type" value="Genomic_DNA"/>
</dbReference>
<dbReference type="EMBL" id="CP000100">
    <property type="protein sequence ID" value="ABB58158.1"/>
    <property type="molecule type" value="Genomic_DNA"/>
</dbReference>
<dbReference type="PIR" id="A57254">
    <property type="entry name" value="A57254"/>
</dbReference>
<dbReference type="RefSeq" id="WP_011244274.1">
    <property type="nucleotide sequence ID" value="NZ_JACJTX010000001.1"/>
</dbReference>
<dbReference type="SMR" id="P35088"/>
<dbReference type="STRING" id="1140.Synpcc7942_2128"/>
<dbReference type="PaxDb" id="1140-Synpcc7942_2128"/>
<dbReference type="KEGG" id="syf:Synpcc7942_2128"/>
<dbReference type="eggNOG" id="COG0526">
    <property type="taxonomic scope" value="Bacteria"/>
</dbReference>
<dbReference type="HOGENOM" id="CLU_064833_2_0_3"/>
<dbReference type="OrthoDB" id="423012at2"/>
<dbReference type="BioCyc" id="SYNEL:SYNPCC7942_2128-MONOMER"/>
<dbReference type="Proteomes" id="UP000889800">
    <property type="component" value="Chromosome"/>
</dbReference>
<dbReference type="GO" id="GO:0005886">
    <property type="term" value="C:plasma membrane"/>
    <property type="evidence" value="ECO:0007669"/>
    <property type="project" value="UniProtKB-SubCell"/>
</dbReference>
<dbReference type="GO" id="GO:0016671">
    <property type="term" value="F:oxidoreductase activity, acting on a sulfur group of donors, disulfide as acceptor"/>
    <property type="evidence" value="ECO:0007669"/>
    <property type="project" value="TreeGrafter"/>
</dbReference>
<dbReference type="CDD" id="cd02950">
    <property type="entry name" value="TxlA"/>
    <property type="match status" value="1"/>
</dbReference>
<dbReference type="Gene3D" id="3.40.30.10">
    <property type="entry name" value="Glutaredoxin"/>
    <property type="match status" value="1"/>
</dbReference>
<dbReference type="InterPro" id="IPR036249">
    <property type="entry name" value="Thioredoxin-like_sf"/>
</dbReference>
<dbReference type="InterPro" id="IPR017937">
    <property type="entry name" value="Thioredoxin_CS"/>
</dbReference>
<dbReference type="InterPro" id="IPR013766">
    <property type="entry name" value="Thioredoxin_domain"/>
</dbReference>
<dbReference type="InterPro" id="IPR044241">
    <property type="entry name" value="TxlA/HCF164"/>
</dbReference>
<dbReference type="PANTHER" id="PTHR47353">
    <property type="entry name" value="THIOREDOXIN-LIKE PROTEIN HCF164, CHLOROPLASTIC"/>
    <property type="match status" value="1"/>
</dbReference>
<dbReference type="PANTHER" id="PTHR47353:SF1">
    <property type="entry name" value="THIOREDOXIN-LIKE PROTEIN HCF164, CHLOROPLASTIC"/>
    <property type="match status" value="1"/>
</dbReference>
<dbReference type="Pfam" id="PF00085">
    <property type="entry name" value="Thioredoxin"/>
    <property type="match status" value="1"/>
</dbReference>
<dbReference type="SUPFAM" id="SSF52833">
    <property type="entry name" value="Thioredoxin-like"/>
    <property type="match status" value="1"/>
</dbReference>
<dbReference type="PROSITE" id="PS00194">
    <property type="entry name" value="THIOREDOXIN_1"/>
    <property type="match status" value="1"/>
</dbReference>
<dbReference type="PROSITE" id="PS51352">
    <property type="entry name" value="THIOREDOXIN_2"/>
    <property type="match status" value="1"/>
</dbReference>